<evidence type="ECO:0000255" key="1">
    <source>
        <dbReference type="HAMAP-Rule" id="MF_00051"/>
    </source>
</evidence>
<evidence type="ECO:0000305" key="2"/>
<keyword id="KW-0028">Amino-acid biosynthesis</keyword>
<keyword id="KW-0963">Cytoplasm</keyword>
<keyword id="KW-0554">One-carbon metabolism</keyword>
<keyword id="KW-0663">Pyridoxal phosphate</keyword>
<keyword id="KW-1185">Reference proteome</keyword>
<keyword id="KW-0808">Transferase</keyword>
<reference key="1">
    <citation type="journal article" date="2016" name="Stand. Genomic Sci.">
        <title>Complete genome sequence of Methanospirillum hungatei type strain JF1.</title>
        <authorList>
            <person name="Gunsalus R.P."/>
            <person name="Cook L.E."/>
            <person name="Crable B."/>
            <person name="Rohlin L."/>
            <person name="McDonald E."/>
            <person name="Mouttaki H."/>
            <person name="Sieber J.R."/>
            <person name="Poweleit N."/>
            <person name="Zhou H."/>
            <person name="Lapidus A.L."/>
            <person name="Daligault H.E."/>
            <person name="Land M."/>
            <person name="Gilna P."/>
            <person name="Ivanova N."/>
            <person name="Kyrpides N."/>
            <person name="Culley D.E."/>
            <person name="McInerney M.J."/>
        </authorList>
    </citation>
    <scope>NUCLEOTIDE SEQUENCE [LARGE SCALE GENOMIC DNA]</scope>
    <source>
        <strain>ATCC 27890 / DSM 864 / NBRC 100397 / JF-1</strain>
    </source>
</reference>
<dbReference type="EC" id="2.1.2.1" evidence="1"/>
<dbReference type="EMBL" id="CP000254">
    <property type="protein sequence ID" value="ABD39801.1"/>
    <property type="status" value="ALT_INIT"/>
    <property type="molecule type" value="Genomic_DNA"/>
</dbReference>
<dbReference type="RefSeq" id="WP_048067159.1">
    <property type="nucleotide sequence ID" value="NC_007796.1"/>
</dbReference>
<dbReference type="SMR" id="Q2FLH5"/>
<dbReference type="FunCoup" id="Q2FLH5">
    <property type="interactions" value="307"/>
</dbReference>
<dbReference type="STRING" id="323259.Mhun_0023"/>
<dbReference type="EnsemblBacteria" id="ABD39801">
    <property type="protein sequence ID" value="ABD39801"/>
    <property type="gene ID" value="Mhun_0023"/>
</dbReference>
<dbReference type="GeneID" id="3924804"/>
<dbReference type="KEGG" id="mhu:Mhun_0023"/>
<dbReference type="eggNOG" id="arCOG00070">
    <property type="taxonomic scope" value="Archaea"/>
</dbReference>
<dbReference type="HOGENOM" id="CLU_022477_2_1_2"/>
<dbReference type="InParanoid" id="Q2FLH5"/>
<dbReference type="OrthoDB" id="5821at2157"/>
<dbReference type="UniPathway" id="UPA00193"/>
<dbReference type="UniPathway" id="UPA00288">
    <property type="reaction ID" value="UER01023"/>
</dbReference>
<dbReference type="Proteomes" id="UP000001941">
    <property type="component" value="Chromosome"/>
</dbReference>
<dbReference type="GO" id="GO:0005829">
    <property type="term" value="C:cytosol"/>
    <property type="evidence" value="ECO:0007669"/>
    <property type="project" value="TreeGrafter"/>
</dbReference>
<dbReference type="GO" id="GO:0004372">
    <property type="term" value="F:glycine hydroxymethyltransferase activity"/>
    <property type="evidence" value="ECO:0007669"/>
    <property type="project" value="UniProtKB-UniRule"/>
</dbReference>
<dbReference type="GO" id="GO:0030170">
    <property type="term" value="F:pyridoxal phosphate binding"/>
    <property type="evidence" value="ECO:0007669"/>
    <property type="project" value="UniProtKB-UniRule"/>
</dbReference>
<dbReference type="GO" id="GO:0019264">
    <property type="term" value="P:glycine biosynthetic process from serine"/>
    <property type="evidence" value="ECO:0007669"/>
    <property type="project" value="UniProtKB-UniRule"/>
</dbReference>
<dbReference type="GO" id="GO:0035999">
    <property type="term" value="P:tetrahydrofolate interconversion"/>
    <property type="evidence" value="ECO:0007669"/>
    <property type="project" value="UniProtKB-UniRule"/>
</dbReference>
<dbReference type="CDD" id="cd00378">
    <property type="entry name" value="SHMT"/>
    <property type="match status" value="1"/>
</dbReference>
<dbReference type="FunFam" id="3.40.640.10:FF:000001">
    <property type="entry name" value="Serine hydroxymethyltransferase"/>
    <property type="match status" value="1"/>
</dbReference>
<dbReference type="FunFam" id="3.90.1150.10:FF:000003">
    <property type="entry name" value="Serine hydroxymethyltransferase"/>
    <property type="match status" value="1"/>
</dbReference>
<dbReference type="Gene3D" id="3.90.1150.10">
    <property type="entry name" value="Aspartate Aminotransferase, domain 1"/>
    <property type="match status" value="1"/>
</dbReference>
<dbReference type="Gene3D" id="3.40.640.10">
    <property type="entry name" value="Type I PLP-dependent aspartate aminotransferase-like (Major domain)"/>
    <property type="match status" value="1"/>
</dbReference>
<dbReference type="HAMAP" id="MF_00051">
    <property type="entry name" value="SHMT"/>
    <property type="match status" value="1"/>
</dbReference>
<dbReference type="InterPro" id="IPR015424">
    <property type="entry name" value="PyrdxlP-dep_Trfase"/>
</dbReference>
<dbReference type="InterPro" id="IPR015421">
    <property type="entry name" value="PyrdxlP-dep_Trfase_major"/>
</dbReference>
<dbReference type="InterPro" id="IPR015422">
    <property type="entry name" value="PyrdxlP-dep_Trfase_small"/>
</dbReference>
<dbReference type="InterPro" id="IPR001085">
    <property type="entry name" value="Ser_HO-MeTrfase"/>
</dbReference>
<dbReference type="InterPro" id="IPR049943">
    <property type="entry name" value="Ser_HO-MeTrfase-like"/>
</dbReference>
<dbReference type="InterPro" id="IPR039429">
    <property type="entry name" value="SHMT-like_dom"/>
</dbReference>
<dbReference type="NCBIfam" id="NF000586">
    <property type="entry name" value="PRK00011.1"/>
    <property type="match status" value="1"/>
</dbReference>
<dbReference type="PANTHER" id="PTHR11680">
    <property type="entry name" value="SERINE HYDROXYMETHYLTRANSFERASE"/>
    <property type="match status" value="1"/>
</dbReference>
<dbReference type="PANTHER" id="PTHR11680:SF35">
    <property type="entry name" value="SERINE HYDROXYMETHYLTRANSFERASE 1"/>
    <property type="match status" value="1"/>
</dbReference>
<dbReference type="Pfam" id="PF00464">
    <property type="entry name" value="SHMT"/>
    <property type="match status" value="1"/>
</dbReference>
<dbReference type="PIRSF" id="PIRSF000412">
    <property type="entry name" value="SHMT"/>
    <property type="match status" value="1"/>
</dbReference>
<dbReference type="SUPFAM" id="SSF53383">
    <property type="entry name" value="PLP-dependent transferases"/>
    <property type="match status" value="1"/>
</dbReference>
<proteinExistence type="inferred from homology"/>
<accession>Q2FLH5</accession>
<feature type="chain" id="PRO_0000235055" description="Serine hydroxymethyltransferase">
    <location>
        <begin position="1"/>
        <end position="414"/>
    </location>
</feature>
<feature type="binding site" evidence="1">
    <location>
        <position position="117"/>
    </location>
    <ligand>
        <name>(6S)-5,6,7,8-tetrahydrofolate</name>
        <dbReference type="ChEBI" id="CHEBI:57453"/>
    </ligand>
</feature>
<feature type="binding site" evidence="1">
    <location>
        <begin position="121"/>
        <end position="123"/>
    </location>
    <ligand>
        <name>(6S)-5,6,7,8-tetrahydrofolate</name>
        <dbReference type="ChEBI" id="CHEBI:57453"/>
    </ligand>
</feature>
<feature type="binding site" evidence="1">
    <location>
        <begin position="349"/>
        <end position="351"/>
    </location>
    <ligand>
        <name>(6S)-5,6,7,8-tetrahydrofolate</name>
        <dbReference type="ChEBI" id="CHEBI:57453"/>
    </ligand>
</feature>
<feature type="site" description="Plays an important role in substrate specificity" evidence="1">
    <location>
        <position position="225"/>
    </location>
</feature>
<feature type="modified residue" description="N6-(pyridoxal phosphate)lysine" evidence="1">
    <location>
        <position position="226"/>
    </location>
</feature>
<comment type="function">
    <text evidence="1">Catalyzes the reversible interconversion of serine and glycine with tetrahydrofolate (THF) serving as the one-carbon carrier. Also exhibits THF-independent aldolase activity toward beta-hydroxyamino acids, producing glycine and aldehydes, via a retro-aldol mechanism.</text>
</comment>
<comment type="catalytic activity">
    <reaction evidence="1">
        <text>(6R)-5,10-methylene-5,6,7,8-tetrahydrofolate + glycine + H2O = (6S)-5,6,7,8-tetrahydrofolate + L-serine</text>
        <dbReference type="Rhea" id="RHEA:15481"/>
        <dbReference type="ChEBI" id="CHEBI:15377"/>
        <dbReference type="ChEBI" id="CHEBI:15636"/>
        <dbReference type="ChEBI" id="CHEBI:33384"/>
        <dbReference type="ChEBI" id="CHEBI:57305"/>
        <dbReference type="ChEBI" id="CHEBI:57453"/>
        <dbReference type="EC" id="2.1.2.1"/>
    </reaction>
</comment>
<comment type="cofactor">
    <cofactor evidence="1">
        <name>pyridoxal 5'-phosphate</name>
        <dbReference type="ChEBI" id="CHEBI:597326"/>
    </cofactor>
</comment>
<comment type="pathway">
    <text evidence="1">One-carbon metabolism; tetrahydrofolate interconversion.</text>
</comment>
<comment type="pathway">
    <text evidence="1">Amino-acid biosynthesis; glycine biosynthesis; glycine from L-serine: step 1/1.</text>
</comment>
<comment type="subunit">
    <text evidence="1">Homodimer.</text>
</comment>
<comment type="subcellular location">
    <subcellularLocation>
        <location evidence="1">Cytoplasm</location>
    </subcellularLocation>
</comment>
<comment type="similarity">
    <text evidence="1">Belongs to the SHMT family.</text>
</comment>
<comment type="sequence caution" evidence="2">
    <conflict type="erroneous initiation">
        <sequence resource="EMBL-CDS" id="ABD39801"/>
    </conflict>
</comment>
<gene>
    <name evidence="1" type="primary">glyA</name>
    <name type="ordered locus">Mhun_0023</name>
</gene>
<protein>
    <recommendedName>
        <fullName evidence="1">Serine hydroxymethyltransferase</fullName>
        <shortName evidence="1">SHMT</shortName>
        <shortName evidence="1">Serine methylase</shortName>
        <ecNumber evidence="1">2.1.2.1</ecNumber>
    </recommendedName>
</protein>
<organism>
    <name type="scientific">Methanospirillum hungatei JF-1 (strain ATCC 27890 / DSM 864 / NBRC 100397 / JF-1)</name>
    <dbReference type="NCBI Taxonomy" id="323259"/>
    <lineage>
        <taxon>Archaea</taxon>
        <taxon>Methanobacteriati</taxon>
        <taxon>Methanobacteriota</taxon>
        <taxon>Stenosarchaea group</taxon>
        <taxon>Methanomicrobia</taxon>
        <taxon>Methanomicrobiales</taxon>
        <taxon>Methanospirillaceae</taxon>
        <taxon>Methanospirillum</taxon>
    </lineage>
</organism>
<name>GLYA_METHJ</name>
<sequence length="414" mass="44828">MSYLETTDPEIAAIIDKETNRQINGLELIASENVVSRAVLEASGSIMTNKYAEGYPGKRYYGGCEFHDMAENLARDRVCSLFGAEHANVQPHSGSQANMAVYFTVLKPSDKILSMNLSQGGHLSHGSPVNFSGIIYESHQYGVDLKTERMDYGTIAEMARTIKPKIIVCGASAYPREIDFKAFAEISEEVGAYCVADIAHIAGLCATGIHPSPVGLTTFTTSTTHKTLRGPRGGFILCDKEFAAPIDKAVFPGMQGGPLMHIIAAKAVCFKEASTKEFKKYSEQVVKNARTMAETLSANGVRLVSGGTDNHLCLLDLTNFGITGLEAEQALGNAGITVNKNTIPNETKSPFVTSGLRVGTPAVTSRGMKESEMKQIGEWIAAIIRDSKNTRLQETIREEVKSLASQYPLYPDLT</sequence>